<evidence type="ECO:0000255" key="1">
    <source>
        <dbReference type="HAMAP-Rule" id="MF_00107"/>
    </source>
</evidence>
<feature type="chain" id="PRO_0000189479" description="2-C-methyl-D-erythritol 2,4-cyclodiphosphate synthase">
    <location>
        <begin position="1"/>
        <end position="159"/>
    </location>
</feature>
<feature type="binding site" evidence="1">
    <location>
        <begin position="9"/>
        <end position="11"/>
    </location>
    <ligand>
        <name>4-CDP-2-C-methyl-D-erythritol 2-phosphate</name>
        <dbReference type="ChEBI" id="CHEBI:57919"/>
    </ligand>
</feature>
<feature type="binding site" evidence="1">
    <location>
        <position position="9"/>
    </location>
    <ligand>
        <name>a divalent metal cation</name>
        <dbReference type="ChEBI" id="CHEBI:60240"/>
    </ligand>
</feature>
<feature type="binding site" evidence="1">
    <location>
        <position position="11"/>
    </location>
    <ligand>
        <name>a divalent metal cation</name>
        <dbReference type="ChEBI" id="CHEBI:60240"/>
    </ligand>
</feature>
<feature type="binding site" evidence="1">
    <location>
        <begin position="35"/>
        <end position="36"/>
    </location>
    <ligand>
        <name>4-CDP-2-C-methyl-D-erythritol 2-phosphate</name>
        <dbReference type="ChEBI" id="CHEBI:57919"/>
    </ligand>
</feature>
<feature type="binding site" evidence="1">
    <location>
        <position position="43"/>
    </location>
    <ligand>
        <name>a divalent metal cation</name>
        <dbReference type="ChEBI" id="CHEBI:60240"/>
    </ligand>
</feature>
<feature type="binding site" evidence="1">
    <location>
        <begin position="57"/>
        <end position="59"/>
    </location>
    <ligand>
        <name>4-CDP-2-C-methyl-D-erythritol 2-phosphate</name>
        <dbReference type="ChEBI" id="CHEBI:57919"/>
    </ligand>
</feature>
<feature type="binding site" evidence="1">
    <location>
        <begin position="62"/>
        <end position="66"/>
    </location>
    <ligand>
        <name>4-CDP-2-C-methyl-D-erythritol 2-phosphate</name>
        <dbReference type="ChEBI" id="CHEBI:57919"/>
    </ligand>
</feature>
<feature type="binding site" evidence="1">
    <location>
        <begin position="133"/>
        <end position="136"/>
    </location>
    <ligand>
        <name>4-CDP-2-C-methyl-D-erythritol 2-phosphate</name>
        <dbReference type="ChEBI" id="CHEBI:57919"/>
    </ligand>
</feature>
<feature type="binding site" evidence="1">
    <location>
        <position position="140"/>
    </location>
    <ligand>
        <name>4-CDP-2-C-methyl-D-erythritol 2-phosphate</name>
        <dbReference type="ChEBI" id="CHEBI:57919"/>
    </ligand>
</feature>
<feature type="binding site" evidence="1">
    <location>
        <position position="143"/>
    </location>
    <ligand>
        <name>4-CDP-2-C-methyl-D-erythritol 2-phosphate</name>
        <dbReference type="ChEBI" id="CHEBI:57919"/>
    </ligand>
</feature>
<feature type="site" description="Transition state stabilizer" evidence="1">
    <location>
        <position position="35"/>
    </location>
</feature>
<feature type="site" description="Transition state stabilizer" evidence="1">
    <location>
        <position position="134"/>
    </location>
</feature>
<sequence>MIRIGHGFDVHAFGEARPLIIGGVEVPYHTGFIAHSDGDVALHALTDALLGALALGDIGKLFPDTDMQFKNIDSRILLREAFRRVQEKGYKIGNVDVTIIAQAPKMRPHIDAMRAVIAEDLQCSVEQVNVKATTTEKLGFTGRSEGITTEAVALLVKSC</sequence>
<accession>Q65Q79</accession>
<reference key="1">
    <citation type="journal article" date="2004" name="Nat. Biotechnol.">
        <title>The genome sequence of the capnophilic rumen bacterium Mannheimia succiniciproducens.</title>
        <authorList>
            <person name="Hong S.H."/>
            <person name="Kim J.S."/>
            <person name="Lee S.Y."/>
            <person name="In Y.H."/>
            <person name="Choi S.S."/>
            <person name="Rih J.-K."/>
            <person name="Kim C.H."/>
            <person name="Jeong H."/>
            <person name="Hur C.G."/>
            <person name="Kim J.J."/>
        </authorList>
    </citation>
    <scope>NUCLEOTIDE SEQUENCE [LARGE SCALE GENOMIC DNA]</scope>
    <source>
        <strain>KCTC 0769BP / MBEL55E</strain>
    </source>
</reference>
<comment type="function">
    <text evidence="1">Involved in the biosynthesis of isopentenyl diphosphate (IPP) and dimethylallyl diphosphate (DMAPP), two major building blocks of isoprenoid compounds. Catalyzes the conversion of 4-diphosphocytidyl-2-C-methyl-D-erythritol 2-phosphate (CDP-ME2P) to 2-C-methyl-D-erythritol 2,4-cyclodiphosphate (ME-CPP) with a corresponding release of cytidine 5-monophosphate (CMP).</text>
</comment>
<comment type="catalytic activity">
    <reaction evidence="1">
        <text>4-CDP-2-C-methyl-D-erythritol 2-phosphate = 2-C-methyl-D-erythritol 2,4-cyclic diphosphate + CMP</text>
        <dbReference type="Rhea" id="RHEA:23864"/>
        <dbReference type="ChEBI" id="CHEBI:57919"/>
        <dbReference type="ChEBI" id="CHEBI:58483"/>
        <dbReference type="ChEBI" id="CHEBI:60377"/>
        <dbReference type="EC" id="4.6.1.12"/>
    </reaction>
</comment>
<comment type="cofactor">
    <cofactor evidence="1">
        <name>a divalent metal cation</name>
        <dbReference type="ChEBI" id="CHEBI:60240"/>
    </cofactor>
    <text evidence="1">Binds 1 divalent metal cation per subunit.</text>
</comment>
<comment type="pathway">
    <text evidence="1">Isoprenoid biosynthesis; isopentenyl diphosphate biosynthesis via DXP pathway; isopentenyl diphosphate from 1-deoxy-D-xylulose 5-phosphate: step 4/6.</text>
</comment>
<comment type="subunit">
    <text evidence="1">Homotrimer.</text>
</comment>
<comment type="similarity">
    <text evidence="1">Belongs to the IspF family.</text>
</comment>
<proteinExistence type="inferred from homology"/>
<keyword id="KW-0414">Isoprene biosynthesis</keyword>
<keyword id="KW-0456">Lyase</keyword>
<keyword id="KW-0479">Metal-binding</keyword>
<gene>
    <name evidence="1" type="primary">ispF</name>
    <name type="ordered locus">MS2274</name>
</gene>
<organism>
    <name type="scientific">Mannheimia succiniciproducens (strain KCTC 0769BP / MBEL55E)</name>
    <dbReference type="NCBI Taxonomy" id="221988"/>
    <lineage>
        <taxon>Bacteria</taxon>
        <taxon>Pseudomonadati</taxon>
        <taxon>Pseudomonadota</taxon>
        <taxon>Gammaproteobacteria</taxon>
        <taxon>Pasteurellales</taxon>
        <taxon>Pasteurellaceae</taxon>
        <taxon>Basfia</taxon>
    </lineage>
</organism>
<name>ISPF_MANSM</name>
<dbReference type="EC" id="4.6.1.12" evidence="1"/>
<dbReference type="EMBL" id="AE016827">
    <property type="protein sequence ID" value="AAU38881.1"/>
    <property type="molecule type" value="Genomic_DNA"/>
</dbReference>
<dbReference type="RefSeq" id="WP_011201423.1">
    <property type="nucleotide sequence ID" value="NC_006300.1"/>
</dbReference>
<dbReference type="SMR" id="Q65Q79"/>
<dbReference type="STRING" id="221988.MS2274"/>
<dbReference type="KEGG" id="msu:MS2274"/>
<dbReference type="eggNOG" id="COG0245">
    <property type="taxonomic scope" value="Bacteria"/>
</dbReference>
<dbReference type="HOGENOM" id="CLU_084630_2_0_6"/>
<dbReference type="OrthoDB" id="9804336at2"/>
<dbReference type="UniPathway" id="UPA00056">
    <property type="reaction ID" value="UER00095"/>
</dbReference>
<dbReference type="Proteomes" id="UP000000607">
    <property type="component" value="Chromosome"/>
</dbReference>
<dbReference type="GO" id="GO:0008685">
    <property type="term" value="F:2-C-methyl-D-erythritol 2,4-cyclodiphosphate synthase activity"/>
    <property type="evidence" value="ECO:0007669"/>
    <property type="project" value="UniProtKB-UniRule"/>
</dbReference>
<dbReference type="GO" id="GO:0046872">
    <property type="term" value="F:metal ion binding"/>
    <property type="evidence" value="ECO:0007669"/>
    <property type="project" value="UniProtKB-KW"/>
</dbReference>
<dbReference type="GO" id="GO:0019288">
    <property type="term" value="P:isopentenyl diphosphate biosynthetic process, methylerythritol 4-phosphate pathway"/>
    <property type="evidence" value="ECO:0007669"/>
    <property type="project" value="UniProtKB-UniRule"/>
</dbReference>
<dbReference type="GO" id="GO:0016114">
    <property type="term" value="P:terpenoid biosynthetic process"/>
    <property type="evidence" value="ECO:0007669"/>
    <property type="project" value="InterPro"/>
</dbReference>
<dbReference type="CDD" id="cd00554">
    <property type="entry name" value="MECDP_synthase"/>
    <property type="match status" value="1"/>
</dbReference>
<dbReference type="FunFam" id="3.30.1330.50:FF:000001">
    <property type="entry name" value="2-C-methyl-D-erythritol 2,4-cyclodiphosphate synthase"/>
    <property type="match status" value="1"/>
</dbReference>
<dbReference type="Gene3D" id="3.30.1330.50">
    <property type="entry name" value="2-C-methyl-D-erythritol 2,4-cyclodiphosphate synthase"/>
    <property type="match status" value="1"/>
</dbReference>
<dbReference type="HAMAP" id="MF_00107">
    <property type="entry name" value="IspF"/>
    <property type="match status" value="1"/>
</dbReference>
<dbReference type="InterPro" id="IPR003526">
    <property type="entry name" value="MECDP_synthase"/>
</dbReference>
<dbReference type="InterPro" id="IPR020555">
    <property type="entry name" value="MECDP_synthase_CS"/>
</dbReference>
<dbReference type="InterPro" id="IPR036571">
    <property type="entry name" value="MECDP_synthase_sf"/>
</dbReference>
<dbReference type="NCBIfam" id="TIGR00151">
    <property type="entry name" value="ispF"/>
    <property type="match status" value="1"/>
</dbReference>
<dbReference type="PANTHER" id="PTHR43181">
    <property type="entry name" value="2-C-METHYL-D-ERYTHRITOL 2,4-CYCLODIPHOSPHATE SYNTHASE, CHLOROPLASTIC"/>
    <property type="match status" value="1"/>
</dbReference>
<dbReference type="PANTHER" id="PTHR43181:SF1">
    <property type="entry name" value="2-C-METHYL-D-ERYTHRITOL 2,4-CYCLODIPHOSPHATE SYNTHASE, CHLOROPLASTIC"/>
    <property type="match status" value="1"/>
</dbReference>
<dbReference type="Pfam" id="PF02542">
    <property type="entry name" value="YgbB"/>
    <property type="match status" value="1"/>
</dbReference>
<dbReference type="SUPFAM" id="SSF69765">
    <property type="entry name" value="IpsF-like"/>
    <property type="match status" value="1"/>
</dbReference>
<dbReference type="PROSITE" id="PS01350">
    <property type="entry name" value="ISPF"/>
    <property type="match status" value="1"/>
</dbReference>
<protein>
    <recommendedName>
        <fullName evidence="1">2-C-methyl-D-erythritol 2,4-cyclodiphosphate synthase</fullName>
        <shortName evidence="1">MECDP-synthase</shortName>
        <shortName evidence="1">MECPP-synthase</shortName>
        <shortName evidence="1">MECPS</shortName>
        <ecNumber evidence="1">4.6.1.12</ecNumber>
    </recommendedName>
</protein>